<sequence length="473" mass="52178">MKILYSLRRFYHVETLFNGTFVLAGRDQETTGFAWWAGNARLINLSGKLLGAHVAHAGLIVFWAGAMNLFEVAHFVPEKPMYEQGLILLPHLATLGWGVGPGGEVLDTFPYFVSGVLHLISSAVLGFGGIYHALLGPETLEESFPFFGYVWKDRNKMTTILGIHLILLGLGSFLLVLKALYFGGVYDTWAPGGGDVRKITNLTLSPSVIFGYLLKSPFGGEGWIVSVDDLEDIIGGHVWLGFICVFGGIWHILTKPFAWARRAFVWSGEAYLSYSLAALSVFGFIACCFVWFNNTAYPSEFYGPTGPEASQAQAFTFLVRDQRLGANVGSAQGPTGLGKYLMRSPTGEVIFGGETMRFWDLRAPWLEPLRGPNGLDLNRLKKDIQPWQERRSAEYMTHAPLGSLNSVGGVATEINAVNYVSPRSWLSTSHFVLGFFFFVGHLWHAGRARAAAAGFEKGIDRDLEPVLYMNPLN</sequence>
<keyword id="KW-0007">Acetylation</keyword>
<keyword id="KW-0148">Chlorophyll</keyword>
<keyword id="KW-0150">Chloroplast</keyword>
<keyword id="KW-0157">Chromophore</keyword>
<keyword id="KW-0464">Manganese</keyword>
<keyword id="KW-0472">Membrane</keyword>
<keyword id="KW-0479">Metal-binding</keyword>
<keyword id="KW-0597">Phosphoprotein</keyword>
<keyword id="KW-0602">Photosynthesis</keyword>
<keyword id="KW-0604">Photosystem II</keyword>
<keyword id="KW-0934">Plastid</keyword>
<keyword id="KW-0793">Thylakoid</keyword>
<keyword id="KW-0812">Transmembrane</keyword>
<keyword id="KW-1133">Transmembrane helix</keyword>
<comment type="function">
    <text evidence="1">One of the components of the core complex of photosystem II (PSII). It binds chlorophyll and helps catalyze the primary light-induced photochemical processes of PSII. PSII is a light-driven water:plastoquinone oxidoreductase, using light energy to abstract electrons from H(2)O, generating O(2) and a proton gradient subsequently used for ATP formation.</text>
</comment>
<comment type="cofactor">
    <text evidence="1">Binds multiple chlorophylls and provides some of the ligands for the Ca-4Mn-5O cluster of the oxygen-evolving complex. It may also provide a ligand for a Cl- that is required for oxygen evolution. PSII binds additional chlorophylls, carotenoids and specific lipids.</text>
</comment>
<comment type="subunit">
    <text evidence="1">PSII is composed of 1 copy each of membrane proteins PsbA, PsbB, PsbC, PsbD, PsbE, PsbF, PsbH, PsbI, PsbJ, PsbK, PsbL, PsbM, PsbT, PsbX, PsbY, PsbZ, Psb30/Ycf12, at least 3 peripheral proteins of the oxygen-evolving complex and a large number of cofactors. It forms dimeric complexes.</text>
</comment>
<comment type="subcellular location">
    <subcellularLocation>
        <location evidence="1">Plastid</location>
        <location evidence="1">Chloroplast thylakoid membrane</location>
        <topology evidence="1">Multi-pass membrane protein</topology>
    </subcellularLocation>
</comment>
<comment type="similarity">
    <text evidence="1">Belongs to the PsbB/PsbC family. PsbC subfamily.</text>
</comment>
<dbReference type="EMBL" id="AM777385">
    <property type="protein sequence ID" value="CAO85962.1"/>
    <property type="molecule type" value="Genomic_DNA"/>
</dbReference>
<dbReference type="RefSeq" id="YP_001531269.1">
    <property type="nucleotide sequence ID" value="NC_009950.1"/>
</dbReference>
<dbReference type="SMR" id="A8Y9F6"/>
<dbReference type="GeneID" id="5696644"/>
<dbReference type="KEGG" id="lper:5696644"/>
<dbReference type="GO" id="GO:0009535">
    <property type="term" value="C:chloroplast thylakoid membrane"/>
    <property type="evidence" value="ECO:0007669"/>
    <property type="project" value="UniProtKB-SubCell"/>
</dbReference>
<dbReference type="GO" id="GO:0009523">
    <property type="term" value="C:photosystem II"/>
    <property type="evidence" value="ECO:0007669"/>
    <property type="project" value="UniProtKB-KW"/>
</dbReference>
<dbReference type="GO" id="GO:0016168">
    <property type="term" value="F:chlorophyll binding"/>
    <property type="evidence" value="ECO:0007669"/>
    <property type="project" value="UniProtKB-UniRule"/>
</dbReference>
<dbReference type="GO" id="GO:0045156">
    <property type="term" value="F:electron transporter, transferring electrons within the cyclic electron transport pathway of photosynthesis activity"/>
    <property type="evidence" value="ECO:0007669"/>
    <property type="project" value="InterPro"/>
</dbReference>
<dbReference type="GO" id="GO:0046872">
    <property type="term" value="F:metal ion binding"/>
    <property type="evidence" value="ECO:0007669"/>
    <property type="project" value="UniProtKB-KW"/>
</dbReference>
<dbReference type="GO" id="GO:0009772">
    <property type="term" value="P:photosynthetic electron transport in photosystem II"/>
    <property type="evidence" value="ECO:0007669"/>
    <property type="project" value="InterPro"/>
</dbReference>
<dbReference type="FunFam" id="1.10.10.670:FF:000001">
    <property type="entry name" value="Photosystem II CP43 reaction center protein"/>
    <property type="match status" value="1"/>
</dbReference>
<dbReference type="Gene3D" id="1.10.10.670">
    <property type="entry name" value="photosystem ii from thermosynechococcus elongatus"/>
    <property type="match status" value="1"/>
</dbReference>
<dbReference type="HAMAP" id="MF_01496">
    <property type="entry name" value="PSII_PsbC_CP43"/>
    <property type="match status" value="1"/>
</dbReference>
<dbReference type="InterPro" id="IPR000932">
    <property type="entry name" value="PS_antenna-like"/>
</dbReference>
<dbReference type="InterPro" id="IPR036001">
    <property type="entry name" value="PS_II_antenna-like_sf"/>
</dbReference>
<dbReference type="InterPro" id="IPR005869">
    <property type="entry name" value="PSII_PsbC"/>
</dbReference>
<dbReference type="InterPro" id="IPR044900">
    <property type="entry name" value="PSII_PsbC_sf"/>
</dbReference>
<dbReference type="NCBIfam" id="TIGR01153">
    <property type="entry name" value="psbC"/>
    <property type="match status" value="1"/>
</dbReference>
<dbReference type="Pfam" id="PF00421">
    <property type="entry name" value="PSII"/>
    <property type="match status" value="1"/>
</dbReference>
<dbReference type="SUPFAM" id="SSF161077">
    <property type="entry name" value="Photosystem II antenna protein-like"/>
    <property type="match status" value="1"/>
</dbReference>
<proteinExistence type="inferred from homology"/>
<reference key="1">
    <citation type="journal article" date="2008" name="PLoS ONE">
        <title>An optimized chloroplast DNA extraction protocol for grasses (Poaceae) proves suitable for whole plastid genome sequencing and SNP detection.</title>
        <authorList>
            <person name="Diekmann K."/>
            <person name="Hodkinson T.R."/>
            <person name="Fricke E."/>
            <person name="Barth S."/>
        </authorList>
    </citation>
    <scope>NUCLEOTIDE SEQUENCE [LARGE SCALE GENOMIC DNA]</scope>
    <source>
        <strain>cv. Cashel</strain>
    </source>
</reference>
<accession>A8Y9F6</accession>
<name>PSBC_LOLPR</name>
<gene>
    <name evidence="1" type="primary">psbC</name>
    <name type="ordered locus">LopeCp010</name>
</gene>
<organism>
    <name type="scientific">Lolium perenne</name>
    <name type="common">Perennial ryegrass</name>
    <dbReference type="NCBI Taxonomy" id="4522"/>
    <lineage>
        <taxon>Eukaryota</taxon>
        <taxon>Viridiplantae</taxon>
        <taxon>Streptophyta</taxon>
        <taxon>Embryophyta</taxon>
        <taxon>Tracheophyta</taxon>
        <taxon>Spermatophyta</taxon>
        <taxon>Magnoliopsida</taxon>
        <taxon>Liliopsida</taxon>
        <taxon>Poales</taxon>
        <taxon>Poaceae</taxon>
        <taxon>BOP clade</taxon>
        <taxon>Pooideae</taxon>
        <taxon>Poodae</taxon>
        <taxon>Poeae</taxon>
        <taxon>Poeae Chloroplast Group 2 (Poeae type)</taxon>
        <taxon>Loliodinae</taxon>
        <taxon>Loliinae</taxon>
        <taxon>Lolium</taxon>
    </lineage>
</organism>
<protein>
    <recommendedName>
        <fullName evidence="1">Photosystem II CP43 reaction center protein</fullName>
    </recommendedName>
    <alternativeName>
        <fullName evidence="1">PSII 43 kDa protein</fullName>
    </alternativeName>
    <alternativeName>
        <fullName evidence="1">Protein CP-43</fullName>
    </alternativeName>
</protein>
<feature type="propeptide" id="PRO_0000431162" evidence="1">
    <location>
        <begin position="1"/>
        <end position="14"/>
    </location>
</feature>
<feature type="chain" id="PRO_0000361416" description="Photosystem II CP43 reaction center protein" evidence="1">
    <location>
        <begin position="15"/>
        <end position="473"/>
    </location>
</feature>
<feature type="transmembrane region" description="Helical" evidence="1">
    <location>
        <begin position="69"/>
        <end position="93"/>
    </location>
</feature>
<feature type="transmembrane region" description="Helical" evidence="1">
    <location>
        <begin position="134"/>
        <end position="155"/>
    </location>
</feature>
<feature type="transmembrane region" description="Helical" evidence="1">
    <location>
        <begin position="178"/>
        <end position="200"/>
    </location>
</feature>
<feature type="transmembrane region" description="Helical" evidence="1">
    <location>
        <begin position="255"/>
        <end position="275"/>
    </location>
</feature>
<feature type="transmembrane region" description="Helical" evidence="1">
    <location>
        <begin position="291"/>
        <end position="312"/>
    </location>
</feature>
<feature type="transmembrane region" description="Helical" evidence="1">
    <location>
        <begin position="447"/>
        <end position="471"/>
    </location>
</feature>
<feature type="binding site" evidence="1">
    <location>
        <position position="367"/>
    </location>
    <ligand>
        <name>[CaMn4O5] cluster</name>
        <dbReference type="ChEBI" id="CHEBI:189552"/>
    </ligand>
</feature>
<feature type="modified residue" description="N-acetylthreonine" evidence="1">
    <location>
        <position position="15"/>
    </location>
</feature>
<feature type="modified residue" description="Phosphothreonine" evidence="1">
    <location>
        <position position="15"/>
    </location>
</feature>
<evidence type="ECO:0000255" key="1">
    <source>
        <dbReference type="HAMAP-Rule" id="MF_01496"/>
    </source>
</evidence>
<geneLocation type="chloroplast"/>